<feature type="chain" id="PRO_0000291007" description="NAD(P)H dehydrogenase (quinone)">
    <location>
        <begin position="1"/>
        <end position="199"/>
    </location>
</feature>
<feature type="domain" description="Flavodoxin-like" evidence="1">
    <location>
        <begin position="4"/>
        <end position="190"/>
    </location>
</feature>
<feature type="region of interest" description="Disordered" evidence="2">
    <location>
        <begin position="158"/>
        <end position="181"/>
    </location>
</feature>
<feature type="compositionally biased region" description="Polar residues" evidence="2">
    <location>
        <begin position="163"/>
        <end position="177"/>
    </location>
</feature>
<feature type="binding site" evidence="1">
    <location>
        <begin position="10"/>
        <end position="15"/>
    </location>
    <ligand>
        <name>FMN</name>
        <dbReference type="ChEBI" id="CHEBI:58210"/>
    </ligand>
</feature>
<feature type="binding site" evidence="1">
    <location>
        <position position="12"/>
    </location>
    <ligand>
        <name>NAD(+)</name>
        <dbReference type="ChEBI" id="CHEBI:57540"/>
    </ligand>
</feature>
<feature type="binding site" evidence="1">
    <location>
        <begin position="78"/>
        <end position="80"/>
    </location>
    <ligand>
        <name>FMN</name>
        <dbReference type="ChEBI" id="CHEBI:58210"/>
    </ligand>
</feature>
<feature type="binding site" evidence="1">
    <location>
        <position position="98"/>
    </location>
    <ligand>
        <name>substrate</name>
    </ligand>
</feature>
<feature type="binding site" evidence="1">
    <location>
        <begin position="113"/>
        <end position="119"/>
    </location>
    <ligand>
        <name>FMN</name>
        <dbReference type="ChEBI" id="CHEBI:58210"/>
    </ligand>
</feature>
<feature type="binding site" evidence="1">
    <location>
        <position position="134"/>
    </location>
    <ligand>
        <name>FMN</name>
        <dbReference type="ChEBI" id="CHEBI:58210"/>
    </ligand>
</feature>
<feature type="strand" evidence="3">
    <location>
        <begin position="3"/>
        <end position="9"/>
    </location>
</feature>
<feature type="strand" evidence="3">
    <location>
        <begin position="11"/>
        <end position="13"/>
    </location>
</feature>
<feature type="helix" evidence="3">
    <location>
        <begin position="14"/>
        <end position="27"/>
    </location>
</feature>
<feature type="turn" evidence="3">
    <location>
        <begin position="28"/>
        <end position="30"/>
    </location>
</feature>
<feature type="strand" evidence="3">
    <location>
        <begin position="32"/>
        <end position="37"/>
    </location>
</feature>
<feature type="turn" evidence="4">
    <location>
        <begin position="45"/>
        <end position="47"/>
    </location>
</feature>
<feature type="strand" evidence="4">
    <location>
        <begin position="48"/>
        <end position="51"/>
    </location>
</feature>
<feature type="strand" evidence="4">
    <location>
        <begin position="56"/>
        <end position="58"/>
    </location>
</feature>
<feature type="helix" evidence="3">
    <location>
        <begin position="63"/>
        <end position="68"/>
    </location>
</feature>
<feature type="strand" evidence="3">
    <location>
        <begin position="70"/>
        <end position="79"/>
    </location>
</feature>
<feature type="helix" evidence="3">
    <location>
        <begin position="85"/>
        <end position="91"/>
    </location>
</feature>
<feature type="turn" evidence="4">
    <location>
        <begin position="92"/>
        <end position="94"/>
    </location>
</feature>
<feature type="helix" evidence="3">
    <location>
        <begin position="95"/>
        <end position="100"/>
    </location>
</feature>
<feature type="turn" evidence="3">
    <location>
        <begin position="101"/>
        <end position="105"/>
    </location>
</feature>
<feature type="strand" evidence="3">
    <location>
        <begin position="107"/>
        <end position="113"/>
    </location>
</feature>
<feature type="helix" evidence="3">
    <location>
        <begin position="122"/>
        <end position="133"/>
    </location>
</feature>
<feature type="turn" evidence="3">
    <location>
        <begin position="134"/>
        <end position="136"/>
    </location>
</feature>
<feature type="helix" evidence="3">
    <location>
        <begin position="144"/>
        <end position="157"/>
    </location>
</feature>
<feature type="helix" evidence="3">
    <location>
        <begin position="177"/>
        <end position="198"/>
    </location>
</feature>
<gene>
    <name type="ordered locus">BAB1_1070</name>
</gene>
<evidence type="ECO:0000255" key="1">
    <source>
        <dbReference type="HAMAP-Rule" id="MF_01017"/>
    </source>
</evidence>
<evidence type="ECO:0000256" key="2">
    <source>
        <dbReference type="SAM" id="MobiDB-lite"/>
    </source>
</evidence>
<evidence type="ECO:0007829" key="3">
    <source>
        <dbReference type="PDB" id="5F4B"/>
    </source>
</evidence>
<evidence type="ECO:0007829" key="4">
    <source>
        <dbReference type="PDB" id="5F51"/>
    </source>
</evidence>
<sequence length="199" mass="21442">MVKMLVLYYSAYGYMEQMAKAAAEGAREGGAEVTLKRVPELVPEEVAKASHYKIDQEVPIATPGELADYDAIIIGTATRYGMMASQMKNFLDQTGGLWAKGALINKVGSVMVSTATQHGGAELALISTQWQMQHHGMIIVPLSYAYREQMGNDVVRGGAPYGMTTTADGDGSRQPSAQELDGARFQGRRVAEITAKLHG</sequence>
<proteinExistence type="evidence at protein level"/>
<comment type="catalytic activity">
    <reaction evidence="1">
        <text>a quinone + NADH + H(+) = a quinol + NAD(+)</text>
        <dbReference type="Rhea" id="RHEA:46160"/>
        <dbReference type="ChEBI" id="CHEBI:15378"/>
        <dbReference type="ChEBI" id="CHEBI:24646"/>
        <dbReference type="ChEBI" id="CHEBI:57540"/>
        <dbReference type="ChEBI" id="CHEBI:57945"/>
        <dbReference type="ChEBI" id="CHEBI:132124"/>
        <dbReference type="EC" id="1.6.5.2"/>
    </reaction>
</comment>
<comment type="catalytic activity">
    <reaction evidence="1">
        <text>a quinone + NADPH + H(+) = a quinol + NADP(+)</text>
        <dbReference type="Rhea" id="RHEA:46164"/>
        <dbReference type="ChEBI" id="CHEBI:15378"/>
        <dbReference type="ChEBI" id="CHEBI:24646"/>
        <dbReference type="ChEBI" id="CHEBI:57783"/>
        <dbReference type="ChEBI" id="CHEBI:58349"/>
        <dbReference type="ChEBI" id="CHEBI:132124"/>
        <dbReference type="EC" id="1.6.5.2"/>
    </reaction>
</comment>
<comment type="cofactor">
    <cofactor evidence="1">
        <name>FMN</name>
        <dbReference type="ChEBI" id="CHEBI:58210"/>
    </cofactor>
    <text evidence="1">Binds 1 FMN per monomer.</text>
</comment>
<comment type="similarity">
    <text evidence="1">Belongs to the WrbA family.</text>
</comment>
<keyword id="KW-0002">3D-structure</keyword>
<keyword id="KW-0285">Flavoprotein</keyword>
<keyword id="KW-0288">FMN</keyword>
<keyword id="KW-0520">NAD</keyword>
<keyword id="KW-0521">NADP</keyword>
<keyword id="KW-0547">Nucleotide-binding</keyword>
<keyword id="KW-0560">Oxidoreductase</keyword>
<keyword id="KW-1185">Reference proteome</keyword>
<reference key="1">
    <citation type="journal article" date="2005" name="Infect. Immun.">
        <title>Whole-genome analyses of speciation events in pathogenic Brucellae.</title>
        <authorList>
            <person name="Chain P.S."/>
            <person name="Comerci D.J."/>
            <person name="Tolmasky M.E."/>
            <person name="Larimer F.W."/>
            <person name="Malfatti S.A."/>
            <person name="Vergez L.M."/>
            <person name="Aguero F."/>
            <person name="Land M.L."/>
            <person name="Ugalde R.A."/>
            <person name="Garcia E."/>
        </authorList>
    </citation>
    <scope>NUCLEOTIDE SEQUENCE [LARGE SCALE GENOMIC DNA]</scope>
    <source>
        <strain>2308</strain>
    </source>
</reference>
<dbReference type="EC" id="1.6.5.2" evidence="1"/>
<dbReference type="EMBL" id="AM040264">
    <property type="protein sequence ID" value="CAJ11026.1"/>
    <property type="molecule type" value="Genomic_DNA"/>
</dbReference>
<dbReference type="PDB" id="5F4B">
    <property type="method" value="X-ray"/>
    <property type="resolution" value="2.50 A"/>
    <property type="chains" value="A/B=1-199"/>
</dbReference>
<dbReference type="PDB" id="5F51">
    <property type="method" value="X-ray"/>
    <property type="resolution" value="2.53 A"/>
    <property type="chains" value="A=1-199"/>
</dbReference>
<dbReference type="PDBsum" id="5F4B"/>
<dbReference type="PDBsum" id="5F51"/>
<dbReference type="SMR" id="Q2YQ23"/>
<dbReference type="STRING" id="359391.BAB1_1070"/>
<dbReference type="DNASU" id="3787724"/>
<dbReference type="KEGG" id="bmf:BAB1_1070"/>
<dbReference type="PATRIC" id="fig|359391.11.peg.1781"/>
<dbReference type="HOGENOM" id="CLU_051402_0_2_5"/>
<dbReference type="PhylomeDB" id="Q2YQ23"/>
<dbReference type="PHI-base" id="PHI:9134"/>
<dbReference type="Proteomes" id="UP000002719">
    <property type="component" value="Chromosome I"/>
</dbReference>
<dbReference type="GO" id="GO:0016020">
    <property type="term" value="C:membrane"/>
    <property type="evidence" value="ECO:0007669"/>
    <property type="project" value="TreeGrafter"/>
</dbReference>
<dbReference type="GO" id="GO:0050660">
    <property type="term" value="F:flavin adenine dinucleotide binding"/>
    <property type="evidence" value="ECO:0007669"/>
    <property type="project" value="UniProtKB-UniRule"/>
</dbReference>
<dbReference type="GO" id="GO:0010181">
    <property type="term" value="F:FMN binding"/>
    <property type="evidence" value="ECO:0007669"/>
    <property type="project" value="InterPro"/>
</dbReference>
<dbReference type="GO" id="GO:0051287">
    <property type="term" value="F:NAD binding"/>
    <property type="evidence" value="ECO:0007669"/>
    <property type="project" value="UniProtKB-UniRule"/>
</dbReference>
<dbReference type="GO" id="GO:0050136">
    <property type="term" value="F:NADH:ubiquinone reductase (non-electrogenic) activity"/>
    <property type="evidence" value="ECO:0007669"/>
    <property type="project" value="RHEA"/>
</dbReference>
<dbReference type="GO" id="GO:0050661">
    <property type="term" value="F:NADP binding"/>
    <property type="evidence" value="ECO:0007669"/>
    <property type="project" value="UniProtKB-UniRule"/>
</dbReference>
<dbReference type="GO" id="GO:0008753">
    <property type="term" value="F:NADPH dehydrogenase (quinone) activity"/>
    <property type="evidence" value="ECO:0007669"/>
    <property type="project" value="RHEA"/>
</dbReference>
<dbReference type="FunFam" id="3.40.50.360:FF:000001">
    <property type="entry name" value="NAD(P)H dehydrogenase (Quinone) FQR1-like"/>
    <property type="match status" value="1"/>
</dbReference>
<dbReference type="Gene3D" id="3.40.50.360">
    <property type="match status" value="1"/>
</dbReference>
<dbReference type="HAMAP" id="MF_01017">
    <property type="entry name" value="NQOR"/>
    <property type="match status" value="1"/>
</dbReference>
<dbReference type="InterPro" id="IPR008254">
    <property type="entry name" value="Flavodoxin/NO_synth"/>
</dbReference>
<dbReference type="InterPro" id="IPR029039">
    <property type="entry name" value="Flavoprotein-like_sf"/>
</dbReference>
<dbReference type="InterPro" id="IPR010089">
    <property type="entry name" value="Flavoprotein_WrbA-like"/>
</dbReference>
<dbReference type="InterPro" id="IPR005025">
    <property type="entry name" value="FMN_Rdtase-like_dom"/>
</dbReference>
<dbReference type="InterPro" id="IPR037513">
    <property type="entry name" value="NQO"/>
</dbReference>
<dbReference type="NCBIfam" id="TIGR01755">
    <property type="entry name" value="flav_wrbA"/>
    <property type="match status" value="1"/>
</dbReference>
<dbReference type="NCBIfam" id="NF002999">
    <property type="entry name" value="PRK03767.1"/>
    <property type="match status" value="1"/>
</dbReference>
<dbReference type="PANTHER" id="PTHR30546">
    <property type="entry name" value="FLAVODOXIN-RELATED PROTEIN WRBA-RELATED"/>
    <property type="match status" value="1"/>
</dbReference>
<dbReference type="PANTHER" id="PTHR30546:SF23">
    <property type="entry name" value="FLAVOPROTEIN-LIKE PROTEIN YCP4-RELATED"/>
    <property type="match status" value="1"/>
</dbReference>
<dbReference type="Pfam" id="PF03358">
    <property type="entry name" value="FMN_red"/>
    <property type="match status" value="1"/>
</dbReference>
<dbReference type="SUPFAM" id="SSF52218">
    <property type="entry name" value="Flavoproteins"/>
    <property type="match status" value="1"/>
</dbReference>
<dbReference type="PROSITE" id="PS50902">
    <property type="entry name" value="FLAVODOXIN_LIKE"/>
    <property type="match status" value="1"/>
</dbReference>
<accession>Q2YQ23</accession>
<organism>
    <name type="scientific">Brucella abortus (strain 2308)</name>
    <dbReference type="NCBI Taxonomy" id="359391"/>
    <lineage>
        <taxon>Bacteria</taxon>
        <taxon>Pseudomonadati</taxon>
        <taxon>Pseudomonadota</taxon>
        <taxon>Alphaproteobacteria</taxon>
        <taxon>Hyphomicrobiales</taxon>
        <taxon>Brucellaceae</taxon>
        <taxon>Brucella/Ochrobactrum group</taxon>
        <taxon>Brucella</taxon>
    </lineage>
</organism>
<name>NQOR_BRUA2</name>
<protein>
    <recommendedName>
        <fullName evidence="1">NAD(P)H dehydrogenase (quinone)</fullName>
        <ecNumber evidence="1">1.6.5.2</ecNumber>
    </recommendedName>
    <alternativeName>
        <fullName>Flavoprotein WrbA</fullName>
    </alternativeName>
    <alternativeName>
        <fullName evidence="1">NAD(P)H:quinone oxidoreductase</fullName>
        <shortName evidence="1">NQO</shortName>
    </alternativeName>
</protein>